<name>PACC1_HUMAN</name>
<accession>Q9H813</accession>
<accession>B7Z4D6</accession>
<accession>Q6IA87</accession>
<accession>Q9NV85</accession>
<dbReference type="EMBL" id="AK001736">
    <property type="protein sequence ID" value="BAA91870.1"/>
    <property type="molecule type" value="mRNA"/>
</dbReference>
<dbReference type="EMBL" id="AK024066">
    <property type="protein sequence ID" value="BAB14810.1"/>
    <property type="molecule type" value="mRNA"/>
</dbReference>
<dbReference type="EMBL" id="AK297200">
    <property type="protein sequence ID" value="BAH12522.1"/>
    <property type="molecule type" value="mRNA"/>
</dbReference>
<dbReference type="EMBL" id="CR457268">
    <property type="protein sequence ID" value="CAG33549.1"/>
    <property type="molecule type" value="mRNA"/>
</dbReference>
<dbReference type="EMBL" id="AC092803">
    <property type="status" value="NOT_ANNOTATED_CDS"/>
    <property type="molecule type" value="Genomic_DNA"/>
</dbReference>
<dbReference type="EMBL" id="AL360091">
    <property type="status" value="NOT_ANNOTATED_CDS"/>
    <property type="molecule type" value="Genomic_DNA"/>
</dbReference>
<dbReference type="EMBL" id="BC006320">
    <property type="protein sequence ID" value="AAH06320.1"/>
    <property type="molecule type" value="mRNA"/>
</dbReference>
<dbReference type="CCDS" id="CCDS1504.1">
    <molecule id="Q9H813-1"/>
</dbReference>
<dbReference type="CCDS" id="CCDS55687.1">
    <molecule id="Q9H813-2"/>
</dbReference>
<dbReference type="RefSeq" id="NP_001185791.1">
    <molecule id="Q9H813-2"/>
    <property type="nucleotide sequence ID" value="NM_001198862.2"/>
</dbReference>
<dbReference type="RefSeq" id="NP_060722.2">
    <molecule id="Q9H813-1"/>
    <property type="nucleotide sequence ID" value="NM_018252.3"/>
</dbReference>
<dbReference type="PDB" id="7JNA">
    <property type="method" value="EM"/>
    <property type="resolution" value="3.60 A"/>
    <property type="chains" value="A/B/C=1-350"/>
</dbReference>
<dbReference type="PDB" id="7JNC">
    <property type="method" value="EM"/>
    <property type="resolution" value="3.73 A"/>
    <property type="chains" value="A/B/C=1-350"/>
</dbReference>
<dbReference type="PDB" id="7SQF">
    <property type="method" value="EM"/>
    <property type="resolution" value="3.10 A"/>
    <property type="chains" value="A/B/C=1-350"/>
</dbReference>
<dbReference type="PDB" id="7SQG">
    <property type="method" value="EM"/>
    <property type="resolution" value="2.60 A"/>
    <property type="chains" value="A/B/C=1-350"/>
</dbReference>
<dbReference type="PDB" id="7SQH">
    <property type="method" value="EM"/>
    <property type="resolution" value="2.50 A"/>
    <property type="chains" value="A/B/C=1-350"/>
</dbReference>
<dbReference type="PDB" id="8EQ4">
    <property type="method" value="EM"/>
    <property type="resolution" value="2.71 A"/>
    <property type="chains" value="A/B/C=1-350"/>
</dbReference>
<dbReference type="PDB" id="8FBL">
    <property type="method" value="EM"/>
    <property type="resolution" value="2.70 A"/>
    <property type="chains" value="A/B/C=57-339"/>
</dbReference>
<dbReference type="PDBsum" id="7JNA"/>
<dbReference type="PDBsum" id="7JNC"/>
<dbReference type="PDBsum" id="7SQF"/>
<dbReference type="PDBsum" id="7SQG"/>
<dbReference type="PDBsum" id="7SQH"/>
<dbReference type="PDBsum" id="8EQ4"/>
<dbReference type="PDBsum" id="8FBL"/>
<dbReference type="EMDB" id="EMD-22403"/>
<dbReference type="EMDB" id="EMD-22404"/>
<dbReference type="EMDB" id="EMD-25383"/>
<dbReference type="EMDB" id="EMD-25384"/>
<dbReference type="EMDB" id="EMD-25385"/>
<dbReference type="EMDB" id="EMD-28535"/>
<dbReference type="EMDB" id="EMD-28964"/>
<dbReference type="SMR" id="Q9H813"/>
<dbReference type="BioGRID" id="120539">
    <property type="interactions" value="123"/>
</dbReference>
<dbReference type="FunCoup" id="Q9H813">
    <property type="interactions" value="424"/>
</dbReference>
<dbReference type="IntAct" id="Q9H813">
    <property type="interactions" value="111"/>
</dbReference>
<dbReference type="STRING" id="9606.ENSP00000438863"/>
<dbReference type="TCDB" id="1.A.114.1.1">
    <property type="family name" value="the proton-activated chloride channel (pacc) family"/>
</dbReference>
<dbReference type="GlyCosmos" id="Q9H813">
    <property type="glycosylation" value="2 sites, No reported glycans"/>
</dbReference>
<dbReference type="GlyGen" id="Q9H813">
    <property type="glycosylation" value="3 sites, 3 N-linked glycans (3 sites)"/>
</dbReference>
<dbReference type="iPTMnet" id="Q9H813"/>
<dbReference type="PhosphoSitePlus" id="Q9H813"/>
<dbReference type="SwissPalm" id="Q9H813"/>
<dbReference type="BioMuta" id="TMEM206"/>
<dbReference type="DMDM" id="74752717"/>
<dbReference type="jPOST" id="Q9H813"/>
<dbReference type="MassIVE" id="Q9H813"/>
<dbReference type="PaxDb" id="9606-ENSP00000438863"/>
<dbReference type="PeptideAtlas" id="Q9H813"/>
<dbReference type="ProteomicsDB" id="81166">
    <molecule id="Q9H813-1"/>
</dbReference>
<dbReference type="ProteomicsDB" id="81167">
    <molecule id="Q9H813-2"/>
</dbReference>
<dbReference type="Pumba" id="Q9H813"/>
<dbReference type="Antibodypedia" id="47113">
    <property type="antibodies" value="31 antibodies from 11 providers"/>
</dbReference>
<dbReference type="DNASU" id="55248"/>
<dbReference type="Ensembl" id="ENST00000261455.9">
    <molecule id="Q9H813-1"/>
    <property type="protein sequence ID" value="ENSP00000261455.4"/>
    <property type="gene ID" value="ENSG00000065600.13"/>
</dbReference>
<dbReference type="Ensembl" id="ENST00000535273.2">
    <molecule id="Q9H813-2"/>
    <property type="protein sequence ID" value="ENSP00000438863.1"/>
    <property type="gene ID" value="ENSG00000065600.13"/>
</dbReference>
<dbReference type="GeneID" id="55248"/>
<dbReference type="KEGG" id="hsa:55248"/>
<dbReference type="MANE-Select" id="ENST00000261455.9">
    <property type="protein sequence ID" value="ENSP00000261455.4"/>
    <property type="RefSeq nucleotide sequence ID" value="NM_018252.3"/>
    <property type="RefSeq protein sequence ID" value="NP_060722.2"/>
</dbReference>
<dbReference type="UCSC" id="uc001hjc.5">
    <molecule id="Q9H813-1"/>
    <property type="organism name" value="human"/>
</dbReference>
<dbReference type="AGR" id="HGNC:25593"/>
<dbReference type="CTD" id="55248"/>
<dbReference type="DisGeNET" id="55248"/>
<dbReference type="GeneCards" id="PACC1"/>
<dbReference type="HGNC" id="HGNC:25593">
    <property type="gene designation" value="PACC1"/>
</dbReference>
<dbReference type="HPA" id="ENSG00000065600">
    <property type="expression patterns" value="Tissue enriched (brain)"/>
</dbReference>
<dbReference type="MIM" id="618427">
    <property type="type" value="gene"/>
</dbReference>
<dbReference type="neXtProt" id="NX_Q9H813"/>
<dbReference type="OpenTargets" id="ENSG00000065600"/>
<dbReference type="PharmGKB" id="PA162406386"/>
<dbReference type="VEuPathDB" id="HostDB:ENSG00000065600"/>
<dbReference type="eggNOG" id="ENOG502QS5H">
    <property type="taxonomic scope" value="Eukaryota"/>
</dbReference>
<dbReference type="GeneTree" id="ENSGT00390000017528"/>
<dbReference type="HOGENOM" id="CLU_068069_0_0_1"/>
<dbReference type="InParanoid" id="Q9H813"/>
<dbReference type="OMA" id="EFMRDCE"/>
<dbReference type="OrthoDB" id="10069062at2759"/>
<dbReference type="PAN-GO" id="Q9H813">
    <property type="GO annotations" value="0 GO annotations based on evolutionary models"/>
</dbReference>
<dbReference type="PhylomeDB" id="Q9H813"/>
<dbReference type="TreeFam" id="TF333307"/>
<dbReference type="PathwayCommons" id="Q9H813"/>
<dbReference type="SignaLink" id="Q9H813"/>
<dbReference type="BioGRID-ORCS" id="55248">
    <property type="hits" value="11 hits in 1158 CRISPR screens"/>
</dbReference>
<dbReference type="ChiTaRS" id="TMEM206">
    <property type="organism name" value="human"/>
</dbReference>
<dbReference type="GenomeRNAi" id="55248"/>
<dbReference type="Pharos" id="Q9H813">
    <property type="development level" value="Tdark"/>
</dbReference>
<dbReference type="PRO" id="PR:Q9H813"/>
<dbReference type="Proteomes" id="UP000005640">
    <property type="component" value="Chromosome 1"/>
</dbReference>
<dbReference type="RNAct" id="Q9H813">
    <property type="molecule type" value="protein"/>
</dbReference>
<dbReference type="Bgee" id="ENSG00000065600">
    <property type="expression patterns" value="Expressed in C1 segment of cervical spinal cord and 157 other cell types or tissues"/>
</dbReference>
<dbReference type="GO" id="GO:0009986">
    <property type="term" value="C:cell surface"/>
    <property type="evidence" value="ECO:0007005"/>
    <property type="project" value="UniProtKB"/>
</dbReference>
<dbReference type="GO" id="GO:0034707">
    <property type="term" value="C:chloride channel complex"/>
    <property type="evidence" value="ECO:0007669"/>
    <property type="project" value="UniProtKB-KW"/>
</dbReference>
<dbReference type="GO" id="GO:0005886">
    <property type="term" value="C:plasma membrane"/>
    <property type="evidence" value="ECO:0000314"/>
    <property type="project" value="UniProtKB"/>
</dbReference>
<dbReference type="GO" id="GO:0061797">
    <property type="term" value="F:pH-gated chloride channel activity"/>
    <property type="evidence" value="ECO:0000314"/>
    <property type="project" value="UniProtKB"/>
</dbReference>
<dbReference type="GO" id="GO:0006821">
    <property type="term" value="P:chloride transport"/>
    <property type="evidence" value="ECO:0000314"/>
    <property type="project" value="UniProtKB"/>
</dbReference>
<dbReference type="InterPro" id="IPR029366">
    <property type="entry name" value="TMEM206"/>
</dbReference>
<dbReference type="PANTHER" id="PTHR16087:SF0">
    <property type="entry name" value="PROTON-ACTIVATED CHLORIDE CHANNEL"/>
    <property type="match status" value="1"/>
</dbReference>
<dbReference type="PANTHER" id="PTHR16087">
    <property type="entry name" value="TRANSMEMBRANE PROTEIN 206"/>
    <property type="match status" value="1"/>
</dbReference>
<dbReference type="Pfam" id="PF15122">
    <property type="entry name" value="TMEM206"/>
    <property type="match status" value="1"/>
</dbReference>
<reference key="1">
    <citation type="journal article" date="2004" name="Nat. Genet.">
        <title>Complete sequencing and characterization of 21,243 full-length human cDNAs.</title>
        <authorList>
            <person name="Ota T."/>
            <person name="Suzuki Y."/>
            <person name="Nishikawa T."/>
            <person name="Otsuki T."/>
            <person name="Sugiyama T."/>
            <person name="Irie R."/>
            <person name="Wakamatsu A."/>
            <person name="Hayashi K."/>
            <person name="Sato H."/>
            <person name="Nagai K."/>
            <person name="Kimura K."/>
            <person name="Makita H."/>
            <person name="Sekine M."/>
            <person name="Obayashi M."/>
            <person name="Nishi T."/>
            <person name="Shibahara T."/>
            <person name="Tanaka T."/>
            <person name="Ishii S."/>
            <person name="Yamamoto J."/>
            <person name="Saito K."/>
            <person name="Kawai Y."/>
            <person name="Isono Y."/>
            <person name="Nakamura Y."/>
            <person name="Nagahari K."/>
            <person name="Murakami K."/>
            <person name="Yasuda T."/>
            <person name="Iwayanagi T."/>
            <person name="Wagatsuma M."/>
            <person name="Shiratori A."/>
            <person name="Sudo H."/>
            <person name="Hosoiri T."/>
            <person name="Kaku Y."/>
            <person name="Kodaira H."/>
            <person name="Kondo H."/>
            <person name="Sugawara M."/>
            <person name="Takahashi M."/>
            <person name="Kanda K."/>
            <person name="Yokoi T."/>
            <person name="Furuya T."/>
            <person name="Kikkawa E."/>
            <person name="Omura Y."/>
            <person name="Abe K."/>
            <person name="Kamihara K."/>
            <person name="Katsuta N."/>
            <person name="Sato K."/>
            <person name="Tanikawa M."/>
            <person name="Yamazaki M."/>
            <person name="Ninomiya K."/>
            <person name="Ishibashi T."/>
            <person name="Yamashita H."/>
            <person name="Murakawa K."/>
            <person name="Fujimori K."/>
            <person name="Tanai H."/>
            <person name="Kimata M."/>
            <person name="Watanabe M."/>
            <person name="Hiraoka S."/>
            <person name="Chiba Y."/>
            <person name="Ishida S."/>
            <person name="Ono Y."/>
            <person name="Takiguchi S."/>
            <person name="Watanabe S."/>
            <person name="Yosida M."/>
            <person name="Hotuta T."/>
            <person name="Kusano J."/>
            <person name="Kanehori K."/>
            <person name="Takahashi-Fujii A."/>
            <person name="Hara H."/>
            <person name="Tanase T.-O."/>
            <person name="Nomura Y."/>
            <person name="Togiya S."/>
            <person name="Komai F."/>
            <person name="Hara R."/>
            <person name="Takeuchi K."/>
            <person name="Arita M."/>
            <person name="Imose N."/>
            <person name="Musashino K."/>
            <person name="Yuuki H."/>
            <person name="Oshima A."/>
            <person name="Sasaki N."/>
            <person name="Aotsuka S."/>
            <person name="Yoshikawa Y."/>
            <person name="Matsunawa H."/>
            <person name="Ichihara T."/>
            <person name="Shiohata N."/>
            <person name="Sano S."/>
            <person name="Moriya S."/>
            <person name="Momiyama H."/>
            <person name="Satoh N."/>
            <person name="Takami S."/>
            <person name="Terashima Y."/>
            <person name="Suzuki O."/>
            <person name="Nakagawa S."/>
            <person name="Senoh A."/>
            <person name="Mizoguchi H."/>
            <person name="Goto Y."/>
            <person name="Shimizu F."/>
            <person name="Wakebe H."/>
            <person name="Hishigaki H."/>
            <person name="Watanabe T."/>
            <person name="Sugiyama A."/>
            <person name="Takemoto M."/>
            <person name="Kawakami B."/>
            <person name="Yamazaki M."/>
            <person name="Watanabe K."/>
            <person name="Kumagai A."/>
            <person name="Itakura S."/>
            <person name="Fukuzumi Y."/>
            <person name="Fujimori Y."/>
            <person name="Komiyama M."/>
            <person name="Tashiro H."/>
            <person name="Tanigami A."/>
            <person name="Fujiwara T."/>
            <person name="Ono T."/>
            <person name="Yamada K."/>
            <person name="Fujii Y."/>
            <person name="Ozaki K."/>
            <person name="Hirao M."/>
            <person name="Ohmori Y."/>
            <person name="Kawabata A."/>
            <person name="Hikiji T."/>
            <person name="Kobatake N."/>
            <person name="Inagaki H."/>
            <person name="Ikema Y."/>
            <person name="Okamoto S."/>
            <person name="Okitani R."/>
            <person name="Kawakami T."/>
            <person name="Noguchi S."/>
            <person name="Itoh T."/>
            <person name="Shigeta K."/>
            <person name="Senba T."/>
            <person name="Matsumura K."/>
            <person name="Nakajima Y."/>
            <person name="Mizuno T."/>
            <person name="Morinaga M."/>
            <person name="Sasaki M."/>
            <person name="Togashi T."/>
            <person name="Oyama M."/>
            <person name="Hata H."/>
            <person name="Watanabe M."/>
            <person name="Komatsu T."/>
            <person name="Mizushima-Sugano J."/>
            <person name="Satoh T."/>
            <person name="Shirai Y."/>
            <person name="Takahashi Y."/>
            <person name="Nakagawa K."/>
            <person name="Okumura K."/>
            <person name="Nagase T."/>
            <person name="Nomura N."/>
            <person name="Kikuchi H."/>
            <person name="Masuho Y."/>
            <person name="Yamashita R."/>
            <person name="Nakai K."/>
            <person name="Yada T."/>
            <person name="Nakamura Y."/>
            <person name="Ohara O."/>
            <person name="Isogai T."/>
            <person name="Sugano S."/>
        </authorList>
    </citation>
    <scope>NUCLEOTIDE SEQUENCE [LARGE SCALE MRNA] (ISOFORMS 1 AND 2)</scope>
    <source>
        <tissue>Brain</tissue>
        <tissue>Retinoblastoma</tissue>
        <tissue>Teratocarcinoma</tissue>
    </source>
</reference>
<reference key="2">
    <citation type="submission" date="2004-06" db="EMBL/GenBank/DDBJ databases">
        <title>Cloning of human full open reading frames in Gateway(TM) system entry vector (pDONR201).</title>
        <authorList>
            <person name="Ebert L."/>
            <person name="Schick M."/>
            <person name="Neubert P."/>
            <person name="Schatten R."/>
            <person name="Henze S."/>
            <person name="Korn B."/>
        </authorList>
    </citation>
    <scope>NUCLEOTIDE SEQUENCE [LARGE SCALE MRNA] (ISOFORM 1)</scope>
</reference>
<reference key="3">
    <citation type="journal article" date="2006" name="Nature">
        <title>The DNA sequence and biological annotation of human chromosome 1.</title>
        <authorList>
            <person name="Gregory S.G."/>
            <person name="Barlow K.F."/>
            <person name="McLay K.E."/>
            <person name="Kaul R."/>
            <person name="Swarbreck D."/>
            <person name="Dunham A."/>
            <person name="Scott C.E."/>
            <person name="Howe K.L."/>
            <person name="Woodfine K."/>
            <person name="Spencer C.C.A."/>
            <person name="Jones M.C."/>
            <person name="Gillson C."/>
            <person name="Searle S."/>
            <person name="Zhou Y."/>
            <person name="Kokocinski F."/>
            <person name="McDonald L."/>
            <person name="Evans R."/>
            <person name="Phillips K."/>
            <person name="Atkinson A."/>
            <person name="Cooper R."/>
            <person name="Jones C."/>
            <person name="Hall R.E."/>
            <person name="Andrews T.D."/>
            <person name="Lloyd C."/>
            <person name="Ainscough R."/>
            <person name="Almeida J.P."/>
            <person name="Ambrose K.D."/>
            <person name="Anderson F."/>
            <person name="Andrew R.W."/>
            <person name="Ashwell R.I.S."/>
            <person name="Aubin K."/>
            <person name="Babbage A.K."/>
            <person name="Bagguley C.L."/>
            <person name="Bailey J."/>
            <person name="Beasley H."/>
            <person name="Bethel G."/>
            <person name="Bird C.P."/>
            <person name="Bray-Allen S."/>
            <person name="Brown J.Y."/>
            <person name="Brown A.J."/>
            <person name="Buckley D."/>
            <person name="Burton J."/>
            <person name="Bye J."/>
            <person name="Carder C."/>
            <person name="Chapman J.C."/>
            <person name="Clark S.Y."/>
            <person name="Clarke G."/>
            <person name="Clee C."/>
            <person name="Cobley V."/>
            <person name="Collier R.E."/>
            <person name="Corby N."/>
            <person name="Coville G.J."/>
            <person name="Davies J."/>
            <person name="Deadman R."/>
            <person name="Dunn M."/>
            <person name="Earthrowl M."/>
            <person name="Ellington A.G."/>
            <person name="Errington H."/>
            <person name="Frankish A."/>
            <person name="Frankland J."/>
            <person name="French L."/>
            <person name="Garner P."/>
            <person name="Garnett J."/>
            <person name="Gay L."/>
            <person name="Ghori M.R.J."/>
            <person name="Gibson R."/>
            <person name="Gilby L.M."/>
            <person name="Gillett W."/>
            <person name="Glithero R.J."/>
            <person name="Grafham D.V."/>
            <person name="Griffiths C."/>
            <person name="Griffiths-Jones S."/>
            <person name="Grocock R."/>
            <person name="Hammond S."/>
            <person name="Harrison E.S.I."/>
            <person name="Hart E."/>
            <person name="Haugen E."/>
            <person name="Heath P.D."/>
            <person name="Holmes S."/>
            <person name="Holt K."/>
            <person name="Howden P.J."/>
            <person name="Hunt A.R."/>
            <person name="Hunt S.E."/>
            <person name="Hunter G."/>
            <person name="Isherwood J."/>
            <person name="James R."/>
            <person name="Johnson C."/>
            <person name="Johnson D."/>
            <person name="Joy A."/>
            <person name="Kay M."/>
            <person name="Kershaw J.K."/>
            <person name="Kibukawa M."/>
            <person name="Kimberley A.M."/>
            <person name="King A."/>
            <person name="Knights A.J."/>
            <person name="Lad H."/>
            <person name="Laird G."/>
            <person name="Lawlor S."/>
            <person name="Leongamornlert D.A."/>
            <person name="Lloyd D.M."/>
            <person name="Loveland J."/>
            <person name="Lovell J."/>
            <person name="Lush M.J."/>
            <person name="Lyne R."/>
            <person name="Martin S."/>
            <person name="Mashreghi-Mohammadi M."/>
            <person name="Matthews L."/>
            <person name="Matthews N.S.W."/>
            <person name="McLaren S."/>
            <person name="Milne S."/>
            <person name="Mistry S."/>
            <person name="Moore M.J.F."/>
            <person name="Nickerson T."/>
            <person name="O'Dell C.N."/>
            <person name="Oliver K."/>
            <person name="Palmeiri A."/>
            <person name="Palmer S.A."/>
            <person name="Parker A."/>
            <person name="Patel D."/>
            <person name="Pearce A.V."/>
            <person name="Peck A.I."/>
            <person name="Pelan S."/>
            <person name="Phelps K."/>
            <person name="Phillimore B.J."/>
            <person name="Plumb R."/>
            <person name="Rajan J."/>
            <person name="Raymond C."/>
            <person name="Rouse G."/>
            <person name="Saenphimmachak C."/>
            <person name="Sehra H.K."/>
            <person name="Sheridan E."/>
            <person name="Shownkeen R."/>
            <person name="Sims S."/>
            <person name="Skuce C.D."/>
            <person name="Smith M."/>
            <person name="Steward C."/>
            <person name="Subramanian S."/>
            <person name="Sycamore N."/>
            <person name="Tracey A."/>
            <person name="Tromans A."/>
            <person name="Van Helmond Z."/>
            <person name="Wall M."/>
            <person name="Wallis J.M."/>
            <person name="White S."/>
            <person name="Whitehead S.L."/>
            <person name="Wilkinson J.E."/>
            <person name="Willey D.L."/>
            <person name="Williams H."/>
            <person name="Wilming L."/>
            <person name="Wray P.W."/>
            <person name="Wu Z."/>
            <person name="Coulson A."/>
            <person name="Vaudin M."/>
            <person name="Sulston J.E."/>
            <person name="Durbin R.M."/>
            <person name="Hubbard T."/>
            <person name="Wooster R."/>
            <person name="Dunham I."/>
            <person name="Carter N.P."/>
            <person name="McVean G."/>
            <person name="Ross M.T."/>
            <person name="Harrow J."/>
            <person name="Olson M.V."/>
            <person name="Beck S."/>
            <person name="Rogers J."/>
            <person name="Bentley D.R."/>
        </authorList>
    </citation>
    <scope>NUCLEOTIDE SEQUENCE [LARGE SCALE GENOMIC DNA]</scope>
</reference>
<reference key="4">
    <citation type="journal article" date="2004" name="Genome Res.">
        <title>The status, quality, and expansion of the NIH full-length cDNA project: the Mammalian Gene Collection (MGC).</title>
        <authorList>
            <consortium name="The MGC Project Team"/>
        </authorList>
    </citation>
    <scope>NUCLEOTIDE SEQUENCE [LARGE SCALE MRNA] (ISOFORM 1)</scope>
    <source>
        <tissue>Muscle</tissue>
    </source>
</reference>
<reference key="5">
    <citation type="journal article" date="2008" name="Proc. Natl. Acad. Sci. U.S.A.">
        <title>A quantitative atlas of mitotic phosphorylation.</title>
        <authorList>
            <person name="Dephoure N."/>
            <person name="Zhou C."/>
            <person name="Villen J."/>
            <person name="Beausoleil S.A."/>
            <person name="Bakalarski C.E."/>
            <person name="Elledge S.J."/>
            <person name="Gygi S.P."/>
        </authorList>
    </citation>
    <scope>IDENTIFICATION BY MASS SPECTROMETRY [LARGE SCALE ANALYSIS]</scope>
    <source>
        <tissue>Cervix carcinoma</tissue>
    </source>
</reference>
<reference key="6">
    <citation type="journal article" date="2009" name="Nat. Biotechnol.">
        <title>Mass-spectrometric identification and relative quantification of N-linked cell surface glycoproteins.</title>
        <authorList>
            <person name="Wollscheid B."/>
            <person name="Bausch-Fluck D."/>
            <person name="Henderson C."/>
            <person name="O'Brien R."/>
            <person name="Bibel M."/>
            <person name="Schiess R."/>
            <person name="Aebersold R."/>
            <person name="Watts J.D."/>
        </authorList>
    </citation>
    <scope>GLYCOSYLATION [LARGE SCALE ANALYSIS] AT ASN-155 AND ASN-162</scope>
    <source>
        <tissue>Leukemic T-cell</tissue>
    </source>
</reference>
<reference key="7">
    <citation type="journal article" date="2009" name="Sci. Signal.">
        <title>Quantitative phosphoproteomic analysis of T cell receptor signaling reveals system-wide modulation of protein-protein interactions.</title>
        <authorList>
            <person name="Mayya V."/>
            <person name="Lundgren D.H."/>
            <person name="Hwang S.-I."/>
            <person name="Rezaul K."/>
            <person name="Wu L."/>
            <person name="Eng J.K."/>
            <person name="Rodionov V."/>
            <person name="Han D.K."/>
        </authorList>
    </citation>
    <scope>PHOSPHORYLATION [LARGE SCALE ANALYSIS] AT SER-9</scope>
    <scope>IDENTIFICATION BY MASS SPECTROMETRY [LARGE SCALE ANALYSIS]</scope>
    <source>
        <tissue>Leukemic T-cell</tissue>
    </source>
</reference>
<reference key="8">
    <citation type="journal article" date="2013" name="J. Proteome Res.">
        <title>Toward a comprehensive characterization of a human cancer cell phosphoproteome.</title>
        <authorList>
            <person name="Zhou H."/>
            <person name="Di Palma S."/>
            <person name="Preisinger C."/>
            <person name="Peng M."/>
            <person name="Polat A.N."/>
            <person name="Heck A.J."/>
            <person name="Mohammed S."/>
        </authorList>
    </citation>
    <scope>IDENTIFICATION BY MASS SPECTROMETRY [LARGE SCALE ANALYSIS]</scope>
    <source>
        <tissue>Cervix carcinoma</tissue>
    </source>
</reference>
<reference key="9">
    <citation type="journal article" date="2019" name="Elife">
        <title>Identification of TMEM206 proteins as pore of PAORAC/ASOR acid-sensitive chloride channels.</title>
        <authorList>
            <person name="Ullrich F."/>
            <person name="Blin S."/>
            <person name="Lazarow K."/>
            <person name="Daubitz T."/>
            <person name="von Kries J.P."/>
            <person name="Jentsch T.J."/>
        </authorList>
    </citation>
    <scope>FUNCTION</scope>
    <scope>TRANSPORTER ACTIVITY</scope>
    <scope>SUBCELLULAR LOCATION</scope>
    <scope>TOPOLOGY</scope>
    <scope>GLYCOSYLATION</scope>
</reference>
<reference key="10">
    <citation type="journal article" date="2019" name="Science">
        <title>PAC, an evolutionarily conserved membrane protein, is a proton-activated chloride channel.</title>
        <authorList>
            <person name="Yang J."/>
            <person name="Chen J."/>
            <person name="Del Carmen Vitery M."/>
            <person name="Osei-Owusu J."/>
            <person name="Chu J."/>
            <person name="Yu H."/>
            <person name="Sun S."/>
            <person name="Qiu Z."/>
        </authorList>
    </citation>
    <scope>FUNCTION</scope>
    <scope>TRANSPORTER ACTIVITY</scope>
    <scope>SUBCELLULAR LOCATION</scope>
    <scope>TOPOLOGY</scope>
    <scope>TISSUE SPECIFICITY</scope>
    <scope>MUTAGENESIS OF ILE-307</scope>
</reference>
<reference key="11">
    <citation type="journal article" date="2006" name="Science">
        <title>The consensus coding sequences of human breast and colorectal cancers.</title>
        <authorList>
            <person name="Sjoeblom T."/>
            <person name="Jones S."/>
            <person name="Wood L.D."/>
            <person name="Parsons D.W."/>
            <person name="Lin J."/>
            <person name="Barber T.D."/>
            <person name="Mandelker D."/>
            <person name="Leary R.J."/>
            <person name="Ptak J."/>
            <person name="Silliman N."/>
            <person name="Szabo S."/>
            <person name="Buckhaults P."/>
            <person name="Farrell C."/>
            <person name="Meeh P."/>
            <person name="Markowitz S.D."/>
            <person name="Willis J."/>
            <person name="Dawson D."/>
            <person name="Willson J.K.V."/>
            <person name="Gazdar A.F."/>
            <person name="Hartigan J."/>
            <person name="Wu L."/>
            <person name="Liu C."/>
            <person name="Parmigiani G."/>
            <person name="Park B.H."/>
            <person name="Bachman K.E."/>
            <person name="Papadopoulos N."/>
            <person name="Vogelstein B."/>
            <person name="Kinzler K.W."/>
            <person name="Velculescu V.E."/>
        </authorList>
    </citation>
    <scope>VARIANT [LARGE SCALE ANALYSIS] ASN-336</scope>
</reference>
<gene>
    <name evidence="14" type="primary">PACC1</name>
    <name evidence="14" type="synonym">C1orf75</name>
    <name evidence="14" type="synonym">TMEM206</name>
</gene>
<protein>
    <recommendedName>
        <fullName evidence="9">Proton-activated chloride channel</fullName>
        <shortName evidence="9">PAC</shortName>
        <shortName evidence="9">hPAC</shortName>
    </recommendedName>
    <alternativeName>
        <fullName evidence="10">Acid-sensitive outwardly-rectifying anion channel</fullName>
        <shortName evidence="10">ASOR</shortName>
    </alternativeName>
    <alternativeName>
        <fullName evidence="10">Proton-activated outwardly rectifying anion channel</fullName>
        <shortName evidence="10">PAORAC</shortName>
    </alternativeName>
    <alternativeName>
        <fullName evidence="11">Transmembrane protein 206</fullName>
        <shortName evidence="10">hTMEM206</shortName>
    </alternativeName>
</protein>
<proteinExistence type="evidence at protein level"/>
<feature type="chain" id="PRO_0000279471" description="Proton-activated chloride channel">
    <location>
        <begin position="1"/>
        <end position="350"/>
    </location>
</feature>
<feature type="topological domain" description="Cytoplasmic" evidence="12 13">
    <location>
        <begin position="1"/>
        <end position="64"/>
    </location>
</feature>
<feature type="transmembrane region" description="Helical" evidence="3">
    <location>
        <begin position="65"/>
        <end position="85"/>
    </location>
</feature>
<feature type="topological domain" description="Extracellular" evidence="3">
    <location>
        <begin position="86"/>
        <end position="301"/>
    </location>
</feature>
<feature type="transmembrane region" description="Helical" evidence="3">
    <location>
        <begin position="302"/>
        <end position="318"/>
    </location>
</feature>
<feature type="topological domain" description="Cytoplasmic" evidence="12 13">
    <location>
        <begin position="319"/>
        <end position="350"/>
    </location>
</feature>
<feature type="modified residue" description="Phosphoserine" evidence="15">
    <location>
        <position position="9"/>
    </location>
</feature>
<feature type="modified residue" description="Phosphotyrosine" evidence="2">
    <location>
        <position position="10"/>
    </location>
</feature>
<feature type="modified residue" description="Phosphoserine" evidence="2">
    <location>
        <position position="14"/>
    </location>
</feature>
<feature type="modified residue" description="Phosphoserine" evidence="1">
    <location>
        <position position="24"/>
    </location>
</feature>
<feature type="glycosylation site" description="N-linked (GlcNAc...) asparagine" evidence="5">
    <location>
        <position position="155"/>
    </location>
</feature>
<feature type="glycosylation site" description="N-linked (GlcNAc...) asparagine" evidence="5">
    <location>
        <position position="162"/>
    </location>
</feature>
<feature type="splice variant" id="VSP_042887" description="In isoform 2." evidence="8">
    <original>E</original>
    <variation>EAVRPALPSSKPCLLTSPAVLVKLLSSSASTSRPPNLGHLWQPSSSVPLHRAASLAKVRQFQ</variation>
    <location>
        <position position="12"/>
    </location>
</feature>
<feature type="sequence variant" id="VAR_035847" description="In a breast cancer sample; somatic mutation; dbSNP:rs1034429230." evidence="4">
    <original>K</original>
    <variation>N</variation>
    <location>
        <position position="336"/>
    </location>
</feature>
<feature type="mutagenesis site" description="Reduced I(-) permeability." evidence="6">
    <original>I</original>
    <variation>A</variation>
    <location>
        <position position="307"/>
    </location>
</feature>
<feature type="sequence conflict" description="In Ref. 2; CAG33549." evidence="11" ref="2">
    <original>QE</original>
    <variation>RV</variation>
    <location>
        <begin position="11"/>
        <end position="12"/>
    </location>
</feature>
<feature type="sequence conflict" description="In Ref. 1; BAA91870." evidence="11" ref="1">
    <original>N</original>
    <variation>S</variation>
    <location>
        <position position="23"/>
    </location>
</feature>
<feature type="sequence conflict" description="In Ref. 2; CAG33549." evidence="11" ref="2">
    <original>D</original>
    <variation>G</variation>
    <location>
        <position position="47"/>
    </location>
</feature>
<feature type="sequence conflict" description="In Ref. 1; BAA91870." evidence="11" ref="1">
    <original>Y</original>
    <variation>C</variation>
    <location>
        <position position="227"/>
    </location>
</feature>
<feature type="helix" evidence="16">
    <location>
        <begin position="66"/>
        <end position="97"/>
    </location>
</feature>
<feature type="strand" evidence="16">
    <location>
        <begin position="100"/>
        <end position="107"/>
    </location>
</feature>
<feature type="strand" evidence="16">
    <location>
        <begin position="115"/>
        <end position="119"/>
    </location>
</feature>
<feature type="strand" evidence="16">
    <location>
        <begin position="124"/>
        <end position="134"/>
    </location>
</feature>
<feature type="strand" evidence="16">
    <location>
        <begin position="147"/>
        <end position="149"/>
    </location>
</feature>
<feature type="strand" evidence="16">
    <location>
        <begin position="151"/>
        <end position="157"/>
    </location>
</feature>
<feature type="turn" evidence="16">
    <location>
        <begin position="159"/>
        <end position="161"/>
    </location>
</feature>
<feature type="strand" evidence="16">
    <location>
        <begin position="165"/>
        <end position="172"/>
    </location>
</feature>
<feature type="turn" evidence="16">
    <location>
        <begin position="177"/>
        <end position="180"/>
    </location>
</feature>
<feature type="strand" evidence="16">
    <location>
        <begin position="181"/>
        <end position="189"/>
    </location>
</feature>
<feature type="strand" evidence="16">
    <location>
        <begin position="198"/>
        <end position="205"/>
    </location>
</feature>
<feature type="helix" evidence="16">
    <location>
        <begin position="207"/>
        <end position="211"/>
    </location>
</feature>
<feature type="helix" evidence="16">
    <location>
        <begin position="216"/>
        <end position="226"/>
    </location>
</feature>
<feature type="strand" evidence="16">
    <location>
        <begin position="229"/>
        <end position="233"/>
    </location>
</feature>
<feature type="strand" evidence="16">
    <location>
        <begin position="236"/>
        <end position="248"/>
    </location>
</feature>
<feature type="strand" evidence="16">
    <location>
        <begin position="250"/>
        <end position="252"/>
    </location>
</feature>
<feature type="strand" evidence="16">
    <location>
        <begin position="254"/>
        <end position="266"/>
    </location>
</feature>
<feature type="helix" evidence="16">
    <location>
        <begin position="273"/>
        <end position="277"/>
    </location>
</feature>
<feature type="strand" evidence="16">
    <location>
        <begin position="278"/>
        <end position="288"/>
    </location>
</feature>
<feature type="strand" evidence="16">
    <location>
        <begin position="290"/>
        <end position="298"/>
    </location>
</feature>
<feature type="helix" evidence="16">
    <location>
        <begin position="303"/>
        <end position="333"/>
    </location>
</feature>
<sequence>MIRQERSTSYQELSEELVQVVENSELADEQDKETVRVQGPGILPGLDSESASSSIRFSKACLKNVFSVLLIFIYLLLMAVAVFLVYRTITDFREKLKHPVMSVSYKEVDRYDAPGIALYPGQAQLLSCKHHYEVIPPLTSPGQPGDMNCTTQRINYTDPFSNQTVKSALIVQGPREVKKRELVFLQFRLNKSSEDFSAIDYLLFSSFQEFLQSPNRVGFMQACESAYSSWKFSGGFRTWVKMSLVKTKEEDGREAVEFRQETSVVNYIDQRPAAKKSAQLFFVVFEWKDPFIQKVQDIVTANPWNTIALLCGAFLALFKAAEFAKLSIKWMIKIRKRYLKRRGQATSHIS</sequence>
<evidence type="ECO:0000250" key="1">
    <source>
        <dbReference type="UniProtKB" id="Q66H28"/>
    </source>
</evidence>
<evidence type="ECO:0000250" key="2">
    <source>
        <dbReference type="UniProtKB" id="Q9D771"/>
    </source>
</evidence>
<evidence type="ECO:0000255" key="3"/>
<evidence type="ECO:0000269" key="4">
    <source>
    </source>
</evidence>
<evidence type="ECO:0000269" key="5">
    <source>
    </source>
</evidence>
<evidence type="ECO:0000269" key="6">
    <source>
    </source>
</evidence>
<evidence type="ECO:0000269" key="7">
    <source>
    </source>
</evidence>
<evidence type="ECO:0000303" key="8">
    <source>
    </source>
</evidence>
<evidence type="ECO:0000303" key="9">
    <source>
    </source>
</evidence>
<evidence type="ECO:0000303" key="10">
    <source>
    </source>
</evidence>
<evidence type="ECO:0000305" key="11"/>
<evidence type="ECO:0000305" key="12">
    <source>
    </source>
</evidence>
<evidence type="ECO:0000305" key="13">
    <source>
    </source>
</evidence>
<evidence type="ECO:0000312" key="14">
    <source>
        <dbReference type="HGNC" id="HGNC:25593"/>
    </source>
</evidence>
<evidence type="ECO:0007744" key="15">
    <source>
    </source>
</evidence>
<evidence type="ECO:0007829" key="16">
    <source>
        <dbReference type="PDB" id="7SQG"/>
    </source>
</evidence>
<organism>
    <name type="scientific">Homo sapiens</name>
    <name type="common">Human</name>
    <dbReference type="NCBI Taxonomy" id="9606"/>
    <lineage>
        <taxon>Eukaryota</taxon>
        <taxon>Metazoa</taxon>
        <taxon>Chordata</taxon>
        <taxon>Craniata</taxon>
        <taxon>Vertebrata</taxon>
        <taxon>Euteleostomi</taxon>
        <taxon>Mammalia</taxon>
        <taxon>Eutheria</taxon>
        <taxon>Euarchontoglires</taxon>
        <taxon>Primates</taxon>
        <taxon>Haplorrhini</taxon>
        <taxon>Catarrhini</taxon>
        <taxon>Hominidae</taxon>
        <taxon>Homo</taxon>
    </lineage>
</organism>
<keyword id="KW-0002">3D-structure</keyword>
<keyword id="KW-0025">Alternative splicing</keyword>
<keyword id="KW-1003">Cell membrane</keyword>
<keyword id="KW-0868">Chloride</keyword>
<keyword id="KW-0869">Chloride channel</keyword>
<keyword id="KW-0325">Glycoprotein</keyword>
<keyword id="KW-0407">Ion channel</keyword>
<keyword id="KW-0406">Ion transport</keyword>
<keyword id="KW-0472">Membrane</keyword>
<keyword id="KW-0597">Phosphoprotein</keyword>
<keyword id="KW-1267">Proteomics identification</keyword>
<keyword id="KW-1185">Reference proteome</keyword>
<keyword id="KW-0812">Transmembrane</keyword>
<keyword id="KW-1133">Transmembrane helix</keyword>
<keyword id="KW-0813">Transport</keyword>
<comment type="function">
    <text evidence="6 7">Chloride channel gated by pH that facilitates the entry of chloride ions into cells upon exposure to extracellular acidic pH (PubMed:31023925, PubMed:31318332). Involved in acidosis-induced cell death by mediating chloride influx and subsequent cell swelling (PubMed:31023925, PubMed:31318332).</text>
</comment>
<comment type="catalytic activity">
    <reaction evidence="6 7">
        <text>chloride(in) = chloride(out)</text>
        <dbReference type="Rhea" id="RHEA:29823"/>
        <dbReference type="ChEBI" id="CHEBI:17996"/>
    </reaction>
</comment>
<comment type="interaction">
    <interactant intactId="EBI-4319734">
        <id>Q9H813</id>
    </interactant>
    <interactant intactId="EBI-12019274">
        <id>Q4LDR2</id>
        <label>CTXN3</label>
    </interactant>
    <organismsDiffer>false</organismsDiffer>
    <experiments>3</experiments>
</comment>
<comment type="interaction">
    <interactant intactId="EBI-4319734">
        <id>Q9H813</id>
    </interactant>
    <interactant intactId="EBI-3919291">
        <id>Q9Y342</id>
        <label>PLLP</label>
    </interactant>
    <organismsDiffer>false</organismsDiffer>
    <experiments>3</experiments>
</comment>
<comment type="interaction">
    <interactant intactId="EBI-4319734">
        <id>Q9H813</id>
    </interactant>
    <interactant intactId="EBI-608347">
        <id>Q04941</id>
        <label>PLP2</label>
    </interactant>
    <organismsDiffer>false</organismsDiffer>
    <experiments>5</experiments>
</comment>
<comment type="interaction">
    <interactant intactId="EBI-4319734">
        <id>Q9H813</id>
    </interactant>
    <interactant intactId="EBI-8652744">
        <id>Q96IW7</id>
        <label>SEC22A</label>
    </interactant>
    <organismsDiffer>false</organismsDiffer>
    <experiments>3</experiments>
</comment>
<comment type="interaction">
    <interactant intactId="EBI-4319734">
        <id>Q9H813</id>
    </interactant>
    <interactant intactId="EBI-348587">
        <id>Q9BVK8</id>
        <label>TMEM147</label>
    </interactant>
    <organismsDiffer>false</organismsDiffer>
    <experiments>6</experiments>
</comment>
<comment type="subcellular location">
    <subcellularLocation>
        <location evidence="6 7">Cell membrane</location>
        <topology evidence="11">Multi-pass membrane protein</topology>
    </subcellularLocation>
</comment>
<comment type="alternative products">
    <event type="alternative splicing"/>
    <isoform>
        <id>Q9H813-1</id>
        <name>1</name>
        <sequence type="displayed"/>
    </isoform>
    <isoform>
        <id>Q9H813-2</id>
        <name>2</name>
        <sequence type="described" ref="VSP_042887"/>
    </isoform>
</comment>
<comment type="tissue specificity">
    <text evidence="6">Widely expressed, with highest expression in brain.</text>
</comment>
<comment type="PTM">
    <text evidence="7">N-glycosylated.</text>
</comment>
<comment type="similarity">
    <text evidence="11">Belongs to the proton-activated chloride channel family.</text>
</comment>